<protein>
    <recommendedName>
        <fullName>Toxin ICK-9</fullName>
    </recommendedName>
</protein>
<name>ICK9_TRILK</name>
<dbReference type="EMBL" id="GAQE01000012">
    <property type="protein sequence ID" value="JAB84542.1"/>
    <property type="molecule type" value="Transcribed_RNA"/>
</dbReference>
<dbReference type="SMR" id="W4VSB9"/>
<dbReference type="ArachnoServer" id="AS001680">
    <property type="toxin name" value="U1-barytoxin-Tl1d"/>
</dbReference>
<dbReference type="GO" id="GO:0005576">
    <property type="term" value="C:extracellular region"/>
    <property type="evidence" value="ECO:0007669"/>
    <property type="project" value="UniProtKB-SubCell"/>
</dbReference>
<dbReference type="GO" id="GO:0099106">
    <property type="term" value="F:ion channel regulator activity"/>
    <property type="evidence" value="ECO:0007669"/>
    <property type="project" value="UniProtKB-KW"/>
</dbReference>
<dbReference type="GO" id="GO:0090729">
    <property type="term" value="F:toxin activity"/>
    <property type="evidence" value="ECO:0007669"/>
    <property type="project" value="UniProtKB-KW"/>
</dbReference>
<accession>W4VSB9</accession>
<sequence length="119" mass="13095">MMKLYSLVIIATLAAAAFAATSEEISAAVSEIISQHQQDLERYAKIVERGEEPKKYIRCSKQLGEKCDLNCECCGAAAYCEDIVYICKEKISDNSILNAFGQAMTAMGNAVSRYYCDAE</sequence>
<keyword id="KW-1015">Disulfide bond</keyword>
<keyword id="KW-0872">Ion channel impairing toxin</keyword>
<keyword id="KW-0960">Knottin</keyword>
<keyword id="KW-0964">Secreted</keyword>
<keyword id="KW-0732">Signal</keyword>
<keyword id="KW-0800">Toxin</keyword>
<organism>
    <name type="scientific">Trittame loki</name>
    <name type="common">Brush-footed trapdoor spider</name>
    <dbReference type="NCBI Taxonomy" id="1295018"/>
    <lineage>
        <taxon>Eukaryota</taxon>
        <taxon>Metazoa</taxon>
        <taxon>Ecdysozoa</taxon>
        <taxon>Arthropoda</taxon>
        <taxon>Chelicerata</taxon>
        <taxon>Arachnida</taxon>
        <taxon>Araneae</taxon>
        <taxon>Mygalomorphae</taxon>
        <taxon>Barychelidae</taxon>
        <taxon>Trittame</taxon>
    </lineage>
</organism>
<evidence type="ECO:0000250" key="1"/>
<evidence type="ECO:0000255" key="2"/>
<evidence type="ECO:0000305" key="3"/>
<proteinExistence type="evidence at transcript level"/>
<feature type="signal peptide" evidence="2">
    <location>
        <begin position="1"/>
        <end position="19"/>
    </location>
</feature>
<feature type="chain" id="PRO_0000429216" description="Toxin ICK-9">
    <location>
        <begin position="20"/>
        <end position="119"/>
    </location>
</feature>
<feature type="disulfide bond" evidence="1">
    <location>
        <begin position="59"/>
        <end position="74"/>
    </location>
</feature>
<feature type="disulfide bond" evidence="1">
    <location>
        <begin position="67"/>
        <end position="80"/>
    </location>
</feature>
<feature type="disulfide bond" evidence="1">
    <location>
        <begin position="71"/>
        <end position="116"/>
    </location>
</feature>
<feature type="disulfide bond" evidence="1">
    <location>
        <begin position="73"/>
        <end position="87"/>
    </location>
</feature>
<comment type="function">
    <text evidence="3">Ion channel inhibitor.</text>
</comment>
<comment type="subcellular location">
    <subcellularLocation>
        <location evidence="1">Secreted</location>
    </subcellularLocation>
</comment>
<comment type="tissue specificity">
    <text>Expressed by the venom gland.</text>
</comment>
<comment type="domain">
    <text evidence="1">The presence of a 'disulfide through disulfide knot' structurally defines this protein as a knottin.</text>
</comment>
<comment type="similarity">
    <text>Belongs to the neurotoxin 25 family. ICK-8 subfamily.</text>
</comment>
<reference key="1">
    <citation type="journal article" date="2013" name="Toxins">
        <title>A proteomics and transcriptomics investigation of the venom from the barychelid spider Trittame loki (brush-foot trapdoor).</title>
        <authorList>
            <person name="Undheim E.A."/>
            <person name="Sunagar K."/>
            <person name="Herzig V."/>
            <person name="Kely L."/>
            <person name="Low D.H."/>
            <person name="Jackson T.N."/>
            <person name="Jones A."/>
            <person name="Kurniawan N."/>
            <person name="King G.F."/>
            <person name="Ali S.A."/>
            <person name="Antunes A."/>
            <person name="Ruder T."/>
            <person name="Fry B.G."/>
        </authorList>
    </citation>
    <scope>NUCLEOTIDE SEQUENCE [MRNA]</scope>
    <source>
        <tissue>Venom gland</tissue>
    </source>
</reference>